<evidence type="ECO:0000250" key="1">
    <source>
        <dbReference type="UniProtKB" id="O61374"/>
    </source>
</evidence>
<evidence type="ECO:0000255" key="2">
    <source>
        <dbReference type="PROSITE-ProRule" id="PRU00176"/>
    </source>
</evidence>
<evidence type="ECO:0000256" key="3">
    <source>
        <dbReference type="SAM" id="MobiDB-lite"/>
    </source>
</evidence>
<evidence type="ECO:0000269" key="4">
    <source>
    </source>
</evidence>
<evidence type="ECO:0000305" key="5"/>
<reference key="1">
    <citation type="journal article" date="1995" name="J. Mol. Evol.">
        <title>The Sex-lethal gene homologue in Chrysomya rufifacies is highly conserved in sequence and exon-intron organization.</title>
        <authorList>
            <person name="Mueller-Holtkamp F."/>
        </authorList>
    </citation>
    <scope>NUCLEOTIDE SEQUENCE [GENOMIC DNA]</scope>
    <scope>FUNCTION</scope>
</reference>
<keyword id="KW-0025">Alternative splicing</keyword>
<keyword id="KW-0539">Nucleus</keyword>
<keyword id="KW-0677">Repeat</keyword>
<keyword id="KW-0694">RNA-binding</keyword>
<gene>
    <name type="primary">SXL</name>
</gene>
<sequence>MWRMSHSLPSGMSRYAFSPQDTDFTSSYPGPSAMNHRGGRGGGYNDFSGGGSAMGSMCNMAPAISTNSVNSGGGDCGDNQGCNGTNLIVNYLPQDMTDRELYALFRTCGPINTCRIMKDYKTGYSFGYAFVDFASEIDAQNAIKSLNGVTVRNKRLKVSYARPGGESIKDTNLYVTNLPRTITDDELEKIFGKYGNIVQKNILRDKLTGKPRGVAFVRFNKREEAQEAISALNNVIPEGASQPLTVRLAEEHGKMKAHHFMNQLGMGPPAAPIPAAGPGYNSMVHRGRHNKNRNQKPHPYHNPQKFI</sequence>
<dbReference type="EMBL" id="S79722">
    <property type="protein sequence ID" value="AAN74807.1"/>
    <property type="molecule type" value="Genomic_DNA"/>
</dbReference>
<dbReference type="SMR" id="O97018"/>
<dbReference type="GO" id="GO:0005634">
    <property type="term" value="C:nucleus"/>
    <property type="evidence" value="ECO:0007669"/>
    <property type="project" value="UniProtKB-SubCell"/>
</dbReference>
<dbReference type="GO" id="GO:1990904">
    <property type="term" value="C:ribonucleoprotein complex"/>
    <property type="evidence" value="ECO:0007669"/>
    <property type="project" value="InterPro"/>
</dbReference>
<dbReference type="GO" id="GO:0003729">
    <property type="term" value="F:mRNA binding"/>
    <property type="evidence" value="ECO:0007669"/>
    <property type="project" value="TreeGrafter"/>
</dbReference>
<dbReference type="GO" id="GO:0000380">
    <property type="term" value="P:alternative mRNA splicing, via spliceosome"/>
    <property type="evidence" value="ECO:0007669"/>
    <property type="project" value="InterPro"/>
</dbReference>
<dbReference type="GO" id="GO:0007530">
    <property type="term" value="P:sex determination"/>
    <property type="evidence" value="ECO:0007669"/>
    <property type="project" value="InterPro"/>
</dbReference>
<dbReference type="CDD" id="cd12376">
    <property type="entry name" value="RRM2_Hu_like"/>
    <property type="match status" value="1"/>
</dbReference>
<dbReference type="FunFam" id="3.30.70.330:FF:000205">
    <property type="entry name" value="Sex lethal, isoform B"/>
    <property type="match status" value="1"/>
</dbReference>
<dbReference type="FunFam" id="3.30.70.330:FF:000383">
    <property type="entry name" value="Sex lethal, isoform D"/>
    <property type="match status" value="1"/>
</dbReference>
<dbReference type="Gene3D" id="3.30.70.330">
    <property type="match status" value="2"/>
</dbReference>
<dbReference type="InterPro" id="IPR050502">
    <property type="entry name" value="Euk_RNA-bind_prot"/>
</dbReference>
<dbReference type="InterPro" id="IPR002343">
    <property type="entry name" value="Hud_Sxl_RNA"/>
</dbReference>
<dbReference type="InterPro" id="IPR012677">
    <property type="entry name" value="Nucleotide-bd_a/b_plait_sf"/>
</dbReference>
<dbReference type="InterPro" id="IPR035979">
    <property type="entry name" value="RBD_domain_sf"/>
</dbReference>
<dbReference type="InterPro" id="IPR000504">
    <property type="entry name" value="RRM_dom"/>
</dbReference>
<dbReference type="InterPro" id="IPR006546">
    <property type="entry name" value="Sxl"/>
</dbReference>
<dbReference type="NCBIfam" id="TIGR01659">
    <property type="entry name" value="sex-lethal"/>
    <property type="match status" value="1"/>
</dbReference>
<dbReference type="PANTHER" id="PTHR48025">
    <property type="entry name" value="OS02G0815200 PROTEIN"/>
    <property type="match status" value="1"/>
</dbReference>
<dbReference type="PANTHER" id="PTHR48025:SF1">
    <property type="entry name" value="RRM DOMAIN-CONTAINING PROTEIN"/>
    <property type="match status" value="1"/>
</dbReference>
<dbReference type="Pfam" id="PF00076">
    <property type="entry name" value="RRM_1"/>
    <property type="match status" value="2"/>
</dbReference>
<dbReference type="PRINTS" id="PR00961">
    <property type="entry name" value="HUDSXLRNA"/>
</dbReference>
<dbReference type="SMART" id="SM00360">
    <property type="entry name" value="RRM"/>
    <property type="match status" value="2"/>
</dbReference>
<dbReference type="SUPFAM" id="SSF54928">
    <property type="entry name" value="RNA-binding domain, RBD"/>
    <property type="match status" value="2"/>
</dbReference>
<dbReference type="PROSITE" id="PS50102">
    <property type="entry name" value="RRM"/>
    <property type="match status" value="2"/>
</dbReference>
<comment type="function">
    <text evidence="4">Unknown; apparently not involved in somatic sex determination.</text>
</comment>
<comment type="subcellular location">
    <subcellularLocation>
        <location evidence="1">Nucleus</location>
    </subcellularLocation>
</comment>
<comment type="alternative products">
    <event type="alternative splicing"/>
    <isoform>
        <id>O97018-1</id>
        <name>1</name>
        <sequence type="displayed"/>
    </isoform>
    <text>A number of isoforms are produced. The event occurs in a sex-independent manner.</text>
</comment>
<comment type="developmental stage">
    <text evidence="4">Expressed in both sexes from the onset of the cellular blastoderm formation throughout development.</text>
</comment>
<comment type="caution">
    <text evidence="5">It is uncertain whether Met-1 is the initiator.</text>
</comment>
<organism>
    <name type="scientific">Chrysomya rufifacies</name>
    <name type="common">Hairy maggot blowfly</name>
    <name type="synonym">Lucilia rufifacies</name>
    <dbReference type="NCBI Taxonomy" id="45450"/>
    <lineage>
        <taxon>Eukaryota</taxon>
        <taxon>Metazoa</taxon>
        <taxon>Ecdysozoa</taxon>
        <taxon>Arthropoda</taxon>
        <taxon>Hexapoda</taxon>
        <taxon>Insecta</taxon>
        <taxon>Pterygota</taxon>
        <taxon>Neoptera</taxon>
        <taxon>Endopterygota</taxon>
        <taxon>Diptera</taxon>
        <taxon>Brachycera</taxon>
        <taxon>Muscomorpha</taxon>
        <taxon>Oestroidea</taxon>
        <taxon>Calliphoridae</taxon>
        <taxon>Chrysomyinae</taxon>
        <taxon>Chrysomya</taxon>
    </lineage>
</organism>
<accession>O97018</accession>
<proteinExistence type="evidence at transcript level"/>
<name>SXL_CHRRU</name>
<feature type="chain" id="PRO_0000081966" description="Sex-lethal homolog">
    <location>
        <begin position="1"/>
        <end position="307"/>
    </location>
</feature>
<feature type="domain" description="RRM 1" evidence="2">
    <location>
        <begin position="85"/>
        <end position="163"/>
    </location>
</feature>
<feature type="domain" description="RRM 2" evidence="2">
    <location>
        <begin position="171"/>
        <end position="251"/>
    </location>
</feature>
<feature type="region of interest" description="Disordered" evidence="3">
    <location>
        <begin position="285"/>
        <end position="307"/>
    </location>
</feature>
<feature type="compositionally biased region" description="Basic residues" evidence="3">
    <location>
        <begin position="285"/>
        <end position="299"/>
    </location>
</feature>
<protein>
    <recommendedName>
        <fullName>Sex-lethal homolog</fullName>
    </recommendedName>
</protein>